<dbReference type="EC" id="3.4.23.-" evidence="6"/>
<dbReference type="EMBL" id="AJ245458">
    <property type="protein sequence ID" value="CAC00542.1"/>
    <property type="molecule type" value="mRNA"/>
</dbReference>
<dbReference type="SMR" id="Q9N9H4"/>
<dbReference type="MEROPS" id="A01.A75"/>
<dbReference type="GlyCosmos" id="Q9N9H4">
    <property type="glycosylation" value="5 sites, No reported glycans"/>
</dbReference>
<dbReference type="GO" id="GO:0005576">
    <property type="term" value="C:extracellular region"/>
    <property type="evidence" value="ECO:0007669"/>
    <property type="project" value="UniProtKB-SubCell"/>
</dbReference>
<dbReference type="GO" id="GO:0005764">
    <property type="term" value="C:lysosome"/>
    <property type="evidence" value="ECO:0007669"/>
    <property type="project" value="TreeGrafter"/>
</dbReference>
<dbReference type="GO" id="GO:0004190">
    <property type="term" value="F:aspartic-type endopeptidase activity"/>
    <property type="evidence" value="ECO:0007669"/>
    <property type="project" value="UniProtKB-KW"/>
</dbReference>
<dbReference type="GO" id="GO:0006508">
    <property type="term" value="P:proteolysis"/>
    <property type="evidence" value="ECO:0007669"/>
    <property type="project" value="UniProtKB-KW"/>
</dbReference>
<dbReference type="CDD" id="cd05471">
    <property type="entry name" value="pepsin_like"/>
    <property type="match status" value="1"/>
</dbReference>
<dbReference type="FunFam" id="2.40.70.10:FF:000058">
    <property type="entry name" value="ASpartyl Protease"/>
    <property type="match status" value="1"/>
</dbReference>
<dbReference type="Gene3D" id="2.40.70.10">
    <property type="entry name" value="Acid Proteases"/>
    <property type="match status" value="2"/>
</dbReference>
<dbReference type="InterPro" id="IPR001461">
    <property type="entry name" value="Aspartic_peptidase_A1"/>
</dbReference>
<dbReference type="InterPro" id="IPR001969">
    <property type="entry name" value="Aspartic_peptidase_AS"/>
</dbReference>
<dbReference type="InterPro" id="IPR034164">
    <property type="entry name" value="Pepsin-like_dom"/>
</dbReference>
<dbReference type="InterPro" id="IPR033121">
    <property type="entry name" value="PEPTIDASE_A1"/>
</dbReference>
<dbReference type="InterPro" id="IPR021109">
    <property type="entry name" value="Peptidase_aspartic_dom_sf"/>
</dbReference>
<dbReference type="PANTHER" id="PTHR47966">
    <property type="entry name" value="BETA-SITE APP-CLEAVING ENZYME, ISOFORM A-RELATED"/>
    <property type="match status" value="1"/>
</dbReference>
<dbReference type="PANTHER" id="PTHR47966:SF45">
    <property type="entry name" value="PEPTIDASE A1 DOMAIN-CONTAINING PROTEIN"/>
    <property type="match status" value="1"/>
</dbReference>
<dbReference type="Pfam" id="PF00026">
    <property type="entry name" value="Asp"/>
    <property type="match status" value="1"/>
</dbReference>
<dbReference type="PRINTS" id="PR00792">
    <property type="entry name" value="PEPSIN"/>
</dbReference>
<dbReference type="SUPFAM" id="SSF50630">
    <property type="entry name" value="Acid proteases"/>
    <property type="match status" value="1"/>
</dbReference>
<dbReference type="PROSITE" id="PS00141">
    <property type="entry name" value="ASP_PROTEASE"/>
    <property type="match status" value="1"/>
</dbReference>
<dbReference type="PROSITE" id="PS51767">
    <property type="entry name" value="PEPTIDASE_A1"/>
    <property type="match status" value="1"/>
</dbReference>
<keyword id="KW-0064">Aspartyl protease</keyword>
<keyword id="KW-1015">Disulfide bond</keyword>
<keyword id="KW-0325">Glycoprotein</keyword>
<keyword id="KW-0378">Hydrolase</keyword>
<keyword id="KW-0645">Protease</keyword>
<keyword id="KW-0964">Secreted</keyword>
<keyword id="KW-0732">Signal</keyword>
<keyword id="KW-0865">Zymogen</keyword>
<reference evidence="10" key="1">
    <citation type="submission" date="1999-07" db="EMBL/GenBank/DDBJ databases">
        <title>An aspartic proteinase from the Human Hookworm Necator americanus:identification of new structural classes of aspartic proteinases in nematodes.</title>
        <authorList>
            <person name="Girdwood K."/>
            <person name="Brown A.P."/>
            <person name="Pritchard D.I."/>
            <person name="Berry C."/>
        </authorList>
    </citation>
    <scope>NUCLEOTIDE SEQUENCE [MRNA]</scope>
</reference>
<reference evidence="9" key="2">
    <citation type="journal article" date="2003" name="J. Infect. Dis.">
        <title>Hookworm aspartic protease, Na-APR-2, cleaves human hemoglobin and serum proteins in a host-specific fashion.</title>
        <authorList>
            <person name="Williamson A.L."/>
            <person name="Brindley P.J."/>
            <person name="Abbenante G."/>
            <person name="Datu B.J."/>
            <person name="Prociv P."/>
            <person name="Berry C."/>
            <person name="Girdwood K."/>
            <person name="Pritchard D.I."/>
            <person name="Fairlie D.P."/>
            <person name="Hotez P.J."/>
            <person name="Zhan B."/>
            <person name="Loukas A."/>
        </authorList>
    </citation>
    <scope>FUNCTION</scope>
    <scope>CATALYTIC ACTIVITY</scope>
    <scope>ACTIVITY REGULATION</scope>
    <scope>BIOPHYSICOCHEMICAL PROPERTIES</scope>
    <scope>SUBCELLULAR LOCATION</scope>
    <scope>TISSUE SPECIFICITY</scope>
    <scope>DEVELOPMENTAL STAGE</scope>
    <scope>PROTEOLYTIC CLEAVAGE</scope>
</reference>
<gene>
    <name evidence="7" type="primary">apr-2</name>
    <name evidence="8" type="synonym">ncpI</name>
</gene>
<comment type="function">
    <text evidence="6">Aspartic protease which cleaves several human serum proteins including hemoglobin, fibrinogen and albumin. Appears to cleave preferentially between P1 (Ala, Leu, Val, Phe and Gly) and P1' (Ala and Leu) residues.</text>
</comment>
<comment type="activity regulation">
    <text evidence="6">Inhibited by pepstatin A.</text>
</comment>
<comment type="biophysicochemical properties">
    <phDependence>
        <text evidence="6">Optimum pH is 5.</text>
    </phDependence>
</comment>
<comment type="subcellular location">
    <subcellularLocation>
        <location evidence="6">Secreted</location>
    </subcellularLocation>
    <text evidence="6">Secreted into the gut lumen.</text>
</comment>
<comment type="tissue specificity">
    <text evidence="6">Expressed in intestine, amphidal glands and excretory gland (at protein level).</text>
</comment>
<comment type="developmental stage">
    <text evidence="6">Expressed at the L4 larval stage and in adults. Not expressed at the L3 infective larval stage.</text>
</comment>
<comment type="PTM">
    <text evidence="6">Cleaved into a mature form.</text>
</comment>
<comment type="similarity">
    <text evidence="2 4 5">Belongs to the peptidase A1 family.</text>
</comment>
<feature type="signal peptide" evidence="2">
    <location>
        <begin position="1"/>
        <end position="16"/>
    </location>
</feature>
<feature type="chain" id="PRO_5004330323" description="Aspartic protease 2" evidence="2">
    <location>
        <begin position="17"/>
        <end position="425"/>
    </location>
</feature>
<feature type="domain" description="Peptidase A1" evidence="4">
    <location>
        <begin position="72"/>
        <end position="421"/>
    </location>
</feature>
<feature type="active site" evidence="4">
    <location>
        <position position="90"/>
    </location>
</feature>
<feature type="active site" evidence="4">
    <location>
        <position position="316"/>
    </location>
</feature>
<feature type="glycosylation site" description="N-linked (GlcNAc...) asparagine" evidence="3">
    <location>
        <position position="163"/>
    </location>
</feature>
<feature type="glycosylation site" description="N-linked (GlcNAc...) asparagine" evidence="3">
    <location>
        <position position="197"/>
    </location>
</feature>
<feature type="glycosylation site" description="N-linked (GlcNAc...) asparagine" evidence="3">
    <location>
        <position position="304"/>
    </location>
</feature>
<feature type="glycosylation site" description="N-linked (GlcNAc...) asparagine" evidence="3">
    <location>
        <position position="354"/>
    </location>
</feature>
<feature type="glycosylation site" description="N-linked (GlcNAc...) asparagine" evidence="3">
    <location>
        <position position="365"/>
    </location>
</feature>
<feature type="disulfide bond" evidence="1">
    <location>
        <begin position="103"/>
        <end position="145"/>
    </location>
</feature>
<feature type="disulfide bond" evidence="4">
    <location>
        <begin position="351"/>
        <end position="382"/>
    </location>
</feature>
<sequence>MRSILVLVALIGCIAAGVYKIPLKRITPPMIKMLRAGTWETYVEGMRKRQLQLLKEHKVHIQDVLGYANMEYLGEITIGTPQQKFLVVLDTGSSNLWVPDDSCYKEKRPDRCLVSNCDAGLVCQVFCPDPKCCEHTREFKQVNACKDKHRFDQKNSNTYVKTNKTWAIAYGTGDARGFFGRDTVRLGAEGKDQLVINDTWFGQAEHIAEFFSNTFLDGILGLAFQELSEGGVAPPIIRAIDLGLLDQPIFTVYFENVGDKEGVYGGVFTWGGLDPDHCEDEVTYEQLTEATYWQFRLKGVSSKNFSSTAGWEAISDTGTSLNGAPRGILRSIARQYNGQYVASQGLYVVDCSKNVTVDVTIGDRNYTMTAKNLVLEIQADICIMAFFEMDMFIGPAWILGDPFIREYCNIHDIEKKRIGFAAVKH</sequence>
<proteinExistence type="evidence at protein level"/>
<name>ASP2_NECAM</name>
<accession>Q9N9H4</accession>
<evidence type="ECO:0000250" key="1">
    <source>
        <dbReference type="UniProtKB" id="P0DJD7"/>
    </source>
</evidence>
<evidence type="ECO:0000255" key="2"/>
<evidence type="ECO:0000255" key="3">
    <source>
        <dbReference type="PROSITE-ProRule" id="PRU00498"/>
    </source>
</evidence>
<evidence type="ECO:0000255" key="4">
    <source>
        <dbReference type="PROSITE-ProRule" id="PRU01103"/>
    </source>
</evidence>
<evidence type="ECO:0000255" key="5">
    <source>
        <dbReference type="RuleBase" id="RU000454"/>
    </source>
</evidence>
<evidence type="ECO:0000269" key="6">
    <source>
    </source>
</evidence>
<evidence type="ECO:0000303" key="7">
    <source>
    </source>
</evidence>
<evidence type="ECO:0000303" key="8">
    <source ref="1"/>
</evidence>
<evidence type="ECO:0000305" key="9"/>
<evidence type="ECO:0000312" key="10">
    <source>
        <dbReference type="EMBL" id="CAC00542.1"/>
    </source>
</evidence>
<organism evidence="10">
    <name type="scientific">Necator americanus</name>
    <name type="common">Human hookworm</name>
    <dbReference type="NCBI Taxonomy" id="51031"/>
    <lineage>
        <taxon>Eukaryota</taxon>
        <taxon>Metazoa</taxon>
        <taxon>Ecdysozoa</taxon>
        <taxon>Nematoda</taxon>
        <taxon>Chromadorea</taxon>
        <taxon>Rhabditida</taxon>
        <taxon>Rhabditina</taxon>
        <taxon>Rhabditomorpha</taxon>
        <taxon>Strongyloidea</taxon>
        <taxon>Ancylostomatidae</taxon>
        <taxon>Bunostominae</taxon>
        <taxon>Necator</taxon>
    </lineage>
</organism>
<protein>
    <recommendedName>
        <fullName evidence="7">Aspartic protease 2</fullName>
        <shortName evidence="7">Na-APR-2</shortName>
        <ecNumber evidence="6">3.4.23.-</ecNumber>
    </recommendedName>
    <alternativeName>
        <fullName evidence="8">Necepsin I</fullName>
    </alternativeName>
    <alternativeName>
        <fullName evidence="7">Pepsin-like aspartic protease 2</fullName>
    </alternativeName>
</protein>